<organism>
    <name type="scientific">Klebsiella pneumoniae (strain 342)</name>
    <dbReference type="NCBI Taxonomy" id="507522"/>
    <lineage>
        <taxon>Bacteria</taxon>
        <taxon>Pseudomonadati</taxon>
        <taxon>Pseudomonadota</taxon>
        <taxon>Gammaproteobacteria</taxon>
        <taxon>Enterobacterales</taxon>
        <taxon>Enterobacteriaceae</taxon>
        <taxon>Klebsiella/Raoultella group</taxon>
        <taxon>Klebsiella</taxon>
        <taxon>Klebsiella pneumoniae complex</taxon>
    </lineage>
</organism>
<sequence length="100" mass="10798">MIPLTHGLILAAILFVLGLTGLVIRRNLLFMLISLEIMINAAALAFVVAGSYWGQADGQIMYILAISLAAAEASIGLALLLQLHRRRQNLNIDSVSELRG</sequence>
<comment type="function">
    <text evidence="1">NDH-1 shuttles electrons from NADH, via FMN and iron-sulfur (Fe-S) centers, to quinones in the respiratory chain. The immediate electron acceptor for the enzyme in this species is believed to be ubiquinone. Couples the redox reaction to proton translocation (for every two electrons transferred, four hydrogen ions are translocated across the cytoplasmic membrane), and thus conserves the redox energy in a proton gradient.</text>
</comment>
<comment type="catalytic activity">
    <reaction evidence="1">
        <text>a quinone + NADH + 5 H(+)(in) = a quinol + NAD(+) + 4 H(+)(out)</text>
        <dbReference type="Rhea" id="RHEA:57888"/>
        <dbReference type="ChEBI" id="CHEBI:15378"/>
        <dbReference type="ChEBI" id="CHEBI:24646"/>
        <dbReference type="ChEBI" id="CHEBI:57540"/>
        <dbReference type="ChEBI" id="CHEBI:57945"/>
        <dbReference type="ChEBI" id="CHEBI:132124"/>
    </reaction>
</comment>
<comment type="subunit">
    <text evidence="1">NDH-1 is composed of 13 different subunits. Subunits NuoA, H, J, K, L, M, N constitute the membrane sector of the complex.</text>
</comment>
<comment type="subcellular location">
    <subcellularLocation>
        <location evidence="1">Cell inner membrane</location>
        <topology evidence="1">Multi-pass membrane protein</topology>
    </subcellularLocation>
</comment>
<comment type="similarity">
    <text evidence="1">Belongs to the complex I subunit 4L family.</text>
</comment>
<reference key="1">
    <citation type="journal article" date="2008" name="PLoS Genet.">
        <title>Complete genome sequence of the N2-fixing broad host range endophyte Klebsiella pneumoniae 342 and virulence predictions verified in mice.</title>
        <authorList>
            <person name="Fouts D.E."/>
            <person name="Tyler H.L."/>
            <person name="DeBoy R.T."/>
            <person name="Daugherty S."/>
            <person name="Ren Q."/>
            <person name="Badger J.H."/>
            <person name="Durkin A.S."/>
            <person name="Huot H."/>
            <person name="Shrivastava S."/>
            <person name="Kothari S."/>
            <person name="Dodson R.J."/>
            <person name="Mohamoud Y."/>
            <person name="Khouri H."/>
            <person name="Roesch L.F.W."/>
            <person name="Krogfelt K.A."/>
            <person name="Struve C."/>
            <person name="Triplett E.W."/>
            <person name="Methe B.A."/>
        </authorList>
    </citation>
    <scope>NUCLEOTIDE SEQUENCE [LARGE SCALE GENOMIC DNA]</scope>
    <source>
        <strain>342</strain>
    </source>
</reference>
<gene>
    <name evidence="1" type="primary">nuoK</name>
    <name type="ordered locus">KPK_1480</name>
</gene>
<keyword id="KW-0997">Cell inner membrane</keyword>
<keyword id="KW-1003">Cell membrane</keyword>
<keyword id="KW-0472">Membrane</keyword>
<keyword id="KW-0520">NAD</keyword>
<keyword id="KW-0874">Quinone</keyword>
<keyword id="KW-1278">Translocase</keyword>
<keyword id="KW-0812">Transmembrane</keyword>
<keyword id="KW-1133">Transmembrane helix</keyword>
<keyword id="KW-0813">Transport</keyword>
<keyword id="KW-0830">Ubiquinone</keyword>
<protein>
    <recommendedName>
        <fullName evidence="1">NADH-quinone oxidoreductase subunit K</fullName>
        <ecNumber evidence="1">7.1.1.-</ecNumber>
    </recommendedName>
    <alternativeName>
        <fullName evidence="1">NADH dehydrogenase I subunit K</fullName>
    </alternativeName>
    <alternativeName>
        <fullName evidence="1">NDH-1 subunit K</fullName>
    </alternativeName>
</protein>
<proteinExistence type="inferred from homology"/>
<feature type="chain" id="PRO_0000390100" description="NADH-quinone oxidoreductase subunit K">
    <location>
        <begin position="1"/>
        <end position="100"/>
    </location>
</feature>
<feature type="transmembrane region" description="Helical" evidence="1">
    <location>
        <begin position="4"/>
        <end position="24"/>
    </location>
</feature>
<feature type="transmembrane region" description="Helical" evidence="1">
    <location>
        <begin position="28"/>
        <end position="48"/>
    </location>
</feature>
<feature type="transmembrane region" description="Helical" evidence="1">
    <location>
        <begin position="60"/>
        <end position="80"/>
    </location>
</feature>
<evidence type="ECO:0000255" key="1">
    <source>
        <dbReference type="HAMAP-Rule" id="MF_01456"/>
    </source>
</evidence>
<dbReference type="EC" id="7.1.1.-" evidence="1"/>
<dbReference type="EMBL" id="CP000964">
    <property type="protein sequence ID" value="ACI11217.1"/>
    <property type="molecule type" value="Genomic_DNA"/>
</dbReference>
<dbReference type="SMR" id="B5XNW3"/>
<dbReference type="KEGG" id="kpe:KPK_1480"/>
<dbReference type="HOGENOM" id="CLU_144724_0_1_6"/>
<dbReference type="Proteomes" id="UP000001734">
    <property type="component" value="Chromosome"/>
</dbReference>
<dbReference type="GO" id="GO:0030964">
    <property type="term" value="C:NADH dehydrogenase complex"/>
    <property type="evidence" value="ECO:0007669"/>
    <property type="project" value="TreeGrafter"/>
</dbReference>
<dbReference type="GO" id="GO:0005886">
    <property type="term" value="C:plasma membrane"/>
    <property type="evidence" value="ECO:0007669"/>
    <property type="project" value="UniProtKB-SubCell"/>
</dbReference>
<dbReference type="GO" id="GO:0050136">
    <property type="term" value="F:NADH:ubiquinone reductase (non-electrogenic) activity"/>
    <property type="evidence" value="ECO:0007669"/>
    <property type="project" value="UniProtKB-UniRule"/>
</dbReference>
<dbReference type="GO" id="GO:0048038">
    <property type="term" value="F:quinone binding"/>
    <property type="evidence" value="ECO:0007669"/>
    <property type="project" value="UniProtKB-KW"/>
</dbReference>
<dbReference type="GO" id="GO:0042773">
    <property type="term" value="P:ATP synthesis coupled electron transport"/>
    <property type="evidence" value="ECO:0007669"/>
    <property type="project" value="InterPro"/>
</dbReference>
<dbReference type="FunFam" id="1.10.287.3510:FF:000001">
    <property type="entry name" value="NADH-quinone oxidoreductase subunit K"/>
    <property type="match status" value="1"/>
</dbReference>
<dbReference type="Gene3D" id="1.10.287.3510">
    <property type="match status" value="1"/>
</dbReference>
<dbReference type="HAMAP" id="MF_01456">
    <property type="entry name" value="NDH1_NuoK"/>
    <property type="match status" value="1"/>
</dbReference>
<dbReference type="InterPro" id="IPR001133">
    <property type="entry name" value="NADH_UbQ_OxRdtase_chain4L/K"/>
</dbReference>
<dbReference type="InterPro" id="IPR039428">
    <property type="entry name" value="NUOK/Mnh_C1-like"/>
</dbReference>
<dbReference type="NCBIfam" id="NF004319">
    <property type="entry name" value="PRK05715.1-1"/>
    <property type="match status" value="1"/>
</dbReference>
<dbReference type="NCBIfam" id="NF004320">
    <property type="entry name" value="PRK05715.1-2"/>
    <property type="match status" value="1"/>
</dbReference>
<dbReference type="PANTHER" id="PTHR11434:SF16">
    <property type="entry name" value="NADH-UBIQUINONE OXIDOREDUCTASE CHAIN 4L"/>
    <property type="match status" value="1"/>
</dbReference>
<dbReference type="PANTHER" id="PTHR11434">
    <property type="entry name" value="NADH-UBIQUINONE OXIDOREDUCTASE SUBUNIT ND4L"/>
    <property type="match status" value="1"/>
</dbReference>
<dbReference type="Pfam" id="PF00420">
    <property type="entry name" value="Oxidored_q2"/>
    <property type="match status" value="1"/>
</dbReference>
<accession>B5XNW3</accession>
<name>NUOK_KLEP3</name>